<reference key="1">
    <citation type="journal article" date="2001" name="Proc. Natl. Acad. Sci. U.S.A.">
        <title>Analysis of the chromosome sequence of the legume symbiont Sinorhizobium meliloti strain 1021.</title>
        <authorList>
            <person name="Capela D."/>
            <person name="Barloy-Hubler F."/>
            <person name="Gouzy J."/>
            <person name="Bothe G."/>
            <person name="Ampe F."/>
            <person name="Batut J."/>
            <person name="Boistard P."/>
            <person name="Becker A."/>
            <person name="Boutry M."/>
            <person name="Cadieu E."/>
            <person name="Dreano S."/>
            <person name="Gloux S."/>
            <person name="Godrie T."/>
            <person name="Goffeau A."/>
            <person name="Kahn D."/>
            <person name="Kiss E."/>
            <person name="Lelaure V."/>
            <person name="Masuy D."/>
            <person name="Pohl T."/>
            <person name="Portetelle D."/>
            <person name="Puehler A."/>
            <person name="Purnelle B."/>
            <person name="Ramsperger U."/>
            <person name="Renard C."/>
            <person name="Thebault P."/>
            <person name="Vandenbol M."/>
            <person name="Weidner S."/>
            <person name="Galibert F."/>
        </authorList>
    </citation>
    <scope>NUCLEOTIDE SEQUENCE [LARGE SCALE GENOMIC DNA]</scope>
    <source>
        <strain>1021</strain>
    </source>
</reference>
<reference key="2">
    <citation type="journal article" date="2001" name="Science">
        <title>The composite genome of the legume symbiont Sinorhizobium meliloti.</title>
        <authorList>
            <person name="Galibert F."/>
            <person name="Finan T.M."/>
            <person name="Long S.R."/>
            <person name="Puehler A."/>
            <person name="Abola P."/>
            <person name="Ampe F."/>
            <person name="Barloy-Hubler F."/>
            <person name="Barnett M.J."/>
            <person name="Becker A."/>
            <person name="Boistard P."/>
            <person name="Bothe G."/>
            <person name="Boutry M."/>
            <person name="Bowser L."/>
            <person name="Buhrmester J."/>
            <person name="Cadieu E."/>
            <person name="Capela D."/>
            <person name="Chain P."/>
            <person name="Cowie A."/>
            <person name="Davis R.W."/>
            <person name="Dreano S."/>
            <person name="Federspiel N.A."/>
            <person name="Fisher R.F."/>
            <person name="Gloux S."/>
            <person name="Godrie T."/>
            <person name="Goffeau A."/>
            <person name="Golding B."/>
            <person name="Gouzy J."/>
            <person name="Gurjal M."/>
            <person name="Hernandez-Lucas I."/>
            <person name="Hong A."/>
            <person name="Huizar L."/>
            <person name="Hyman R.W."/>
            <person name="Jones T."/>
            <person name="Kahn D."/>
            <person name="Kahn M.L."/>
            <person name="Kalman S."/>
            <person name="Keating D.H."/>
            <person name="Kiss E."/>
            <person name="Komp C."/>
            <person name="Lelaure V."/>
            <person name="Masuy D."/>
            <person name="Palm C."/>
            <person name="Peck M.C."/>
            <person name="Pohl T.M."/>
            <person name="Portetelle D."/>
            <person name="Purnelle B."/>
            <person name="Ramsperger U."/>
            <person name="Surzycki R."/>
            <person name="Thebault P."/>
            <person name="Vandenbol M."/>
            <person name="Vorhoelter F.J."/>
            <person name="Weidner S."/>
            <person name="Wells D.H."/>
            <person name="Wong K."/>
            <person name="Yeh K.-C."/>
            <person name="Batut J."/>
        </authorList>
    </citation>
    <scope>NUCLEOTIDE SEQUENCE [LARGE SCALE GENOMIC DNA]</scope>
    <source>
        <strain>1021</strain>
    </source>
</reference>
<keyword id="KW-0963">Cytoplasm</keyword>
<keyword id="KW-0255">Endonuclease</keyword>
<keyword id="KW-0378">Hydrolase</keyword>
<keyword id="KW-0479">Metal-binding</keyword>
<keyword id="KW-0540">Nuclease</keyword>
<keyword id="KW-1185">Reference proteome</keyword>
<keyword id="KW-0690">Ribosome biogenesis</keyword>
<keyword id="KW-0698">rRNA processing</keyword>
<keyword id="KW-0862">Zinc</keyword>
<dbReference type="EC" id="3.1.-.-" evidence="1"/>
<dbReference type="EMBL" id="AL591688">
    <property type="protein sequence ID" value="CAC41844.1"/>
    <property type="molecule type" value="Genomic_DNA"/>
</dbReference>
<dbReference type="RefSeq" id="NP_384513.1">
    <property type="nucleotide sequence ID" value="NC_003047.1"/>
</dbReference>
<dbReference type="RefSeq" id="WP_010968555.1">
    <property type="nucleotide sequence ID" value="NC_003047.1"/>
</dbReference>
<dbReference type="SMR" id="Q92SI5"/>
<dbReference type="EnsemblBacteria" id="CAC41844">
    <property type="protein sequence ID" value="CAC41844"/>
    <property type="gene ID" value="SMc01113"/>
</dbReference>
<dbReference type="KEGG" id="sme:SMc01113"/>
<dbReference type="PATRIC" id="fig|266834.11.peg.1780"/>
<dbReference type="eggNOG" id="COG0319">
    <property type="taxonomic scope" value="Bacteria"/>
</dbReference>
<dbReference type="HOGENOM" id="CLU_106710_0_0_5"/>
<dbReference type="OrthoDB" id="9807740at2"/>
<dbReference type="Proteomes" id="UP000001976">
    <property type="component" value="Chromosome"/>
</dbReference>
<dbReference type="GO" id="GO:0005737">
    <property type="term" value="C:cytoplasm"/>
    <property type="evidence" value="ECO:0007669"/>
    <property type="project" value="UniProtKB-SubCell"/>
</dbReference>
<dbReference type="GO" id="GO:0004222">
    <property type="term" value="F:metalloendopeptidase activity"/>
    <property type="evidence" value="ECO:0007669"/>
    <property type="project" value="InterPro"/>
</dbReference>
<dbReference type="GO" id="GO:0004521">
    <property type="term" value="F:RNA endonuclease activity"/>
    <property type="evidence" value="ECO:0007669"/>
    <property type="project" value="UniProtKB-UniRule"/>
</dbReference>
<dbReference type="GO" id="GO:0008270">
    <property type="term" value="F:zinc ion binding"/>
    <property type="evidence" value="ECO:0007669"/>
    <property type="project" value="UniProtKB-UniRule"/>
</dbReference>
<dbReference type="GO" id="GO:0006364">
    <property type="term" value="P:rRNA processing"/>
    <property type="evidence" value="ECO:0007669"/>
    <property type="project" value="UniProtKB-UniRule"/>
</dbReference>
<dbReference type="Gene3D" id="3.40.390.30">
    <property type="entry name" value="Metalloproteases ('zincins'), catalytic domain"/>
    <property type="match status" value="1"/>
</dbReference>
<dbReference type="HAMAP" id="MF_00009">
    <property type="entry name" value="Endoribonucl_YbeY"/>
    <property type="match status" value="1"/>
</dbReference>
<dbReference type="InterPro" id="IPR023091">
    <property type="entry name" value="MetalPrtase_cat_dom_sf_prd"/>
</dbReference>
<dbReference type="InterPro" id="IPR002036">
    <property type="entry name" value="YbeY"/>
</dbReference>
<dbReference type="InterPro" id="IPR020549">
    <property type="entry name" value="YbeY_CS"/>
</dbReference>
<dbReference type="NCBIfam" id="TIGR00043">
    <property type="entry name" value="rRNA maturation RNase YbeY"/>
    <property type="match status" value="1"/>
</dbReference>
<dbReference type="PANTHER" id="PTHR46986">
    <property type="entry name" value="ENDORIBONUCLEASE YBEY, CHLOROPLASTIC"/>
    <property type="match status" value="1"/>
</dbReference>
<dbReference type="PANTHER" id="PTHR46986:SF1">
    <property type="entry name" value="ENDORIBONUCLEASE YBEY, CHLOROPLASTIC"/>
    <property type="match status" value="1"/>
</dbReference>
<dbReference type="Pfam" id="PF02130">
    <property type="entry name" value="YbeY"/>
    <property type="match status" value="1"/>
</dbReference>
<dbReference type="SUPFAM" id="SSF55486">
    <property type="entry name" value="Metalloproteases ('zincins'), catalytic domain"/>
    <property type="match status" value="1"/>
</dbReference>
<dbReference type="PROSITE" id="PS01306">
    <property type="entry name" value="UPF0054"/>
    <property type="match status" value="1"/>
</dbReference>
<proteinExistence type="inferred from homology"/>
<gene>
    <name evidence="1" type="primary">ybeY</name>
    <name type="ordered locus">R00407</name>
    <name type="ORF">SMc01113</name>
</gene>
<feature type="chain" id="PRO_0000102515" description="Endoribonuclease YbeY">
    <location>
        <begin position="1"/>
        <end position="168"/>
    </location>
</feature>
<feature type="binding site" evidence="1">
    <location>
        <position position="126"/>
    </location>
    <ligand>
        <name>Zn(2+)</name>
        <dbReference type="ChEBI" id="CHEBI:29105"/>
        <note>catalytic</note>
    </ligand>
</feature>
<feature type="binding site" evidence="1">
    <location>
        <position position="130"/>
    </location>
    <ligand>
        <name>Zn(2+)</name>
        <dbReference type="ChEBI" id="CHEBI:29105"/>
        <note>catalytic</note>
    </ligand>
</feature>
<feature type="binding site" evidence="1">
    <location>
        <position position="136"/>
    </location>
    <ligand>
        <name>Zn(2+)</name>
        <dbReference type="ChEBI" id="CHEBI:29105"/>
        <note>catalytic</note>
    </ligand>
</feature>
<organism>
    <name type="scientific">Rhizobium meliloti (strain 1021)</name>
    <name type="common">Ensifer meliloti</name>
    <name type="synonym">Sinorhizobium meliloti</name>
    <dbReference type="NCBI Taxonomy" id="266834"/>
    <lineage>
        <taxon>Bacteria</taxon>
        <taxon>Pseudomonadati</taxon>
        <taxon>Pseudomonadota</taxon>
        <taxon>Alphaproteobacteria</taxon>
        <taxon>Hyphomicrobiales</taxon>
        <taxon>Rhizobiaceae</taxon>
        <taxon>Sinorhizobium/Ensifer group</taxon>
        <taxon>Sinorhizobium</taxon>
    </lineage>
</organism>
<comment type="function">
    <text evidence="1">Single strand-specific metallo-endoribonuclease involved in late-stage 70S ribosome quality control and in maturation of the 3' terminus of the 16S rRNA.</text>
</comment>
<comment type="cofactor">
    <cofactor evidence="1">
        <name>Zn(2+)</name>
        <dbReference type="ChEBI" id="CHEBI:29105"/>
    </cofactor>
    <text evidence="1">Binds 1 zinc ion.</text>
</comment>
<comment type="subcellular location">
    <subcellularLocation>
        <location evidence="1">Cytoplasm</location>
    </subcellularLocation>
</comment>
<comment type="similarity">
    <text evidence="1">Belongs to the endoribonuclease YbeY family.</text>
</comment>
<protein>
    <recommendedName>
        <fullName evidence="1">Endoribonuclease YbeY</fullName>
        <ecNumber evidence="1">3.1.-.-</ecNumber>
    </recommendedName>
</protein>
<name>YBEY_RHIME</name>
<sequence>MTALDIQISVEAGDWPPEDELQSFCERVLEAAADFLAREENQPLPAQAAELSLVFTDDQSIRAINAEWRGQDKATNVLSFPAFPVTPGRMPGPMLGDIVVAHETLRREAAELEKPFDAHLTHLLVHGFLHLFGYDHIEDDEAERMEGLETRILARLGLSDPYGDQPPH</sequence>
<evidence type="ECO:0000255" key="1">
    <source>
        <dbReference type="HAMAP-Rule" id="MF_00009"/>
    </source>
</evidence>
<accession>Q92SI5</accession>